<protein>
    <recommendedName>
        <fullName>Replication initiation protein</fullName>
    </recommendedName>
</protein>
<evidence type="ECO:0000256" key="1">
    <source>
        <dbReference type="SAM" id="MobiDB-lite"/>
    </source>
</evidence>
<evidence type="ECO:0000305" key="2"/>
<evidence type="ECO:0007829" key="3">
    <source>
        <dbReference type="PDB" id="4CWC"/>
    </source>
</evidence>
<keyword id="KW-0002">3D-structure</keyword>
<keyword id="KW-0235">DNA replication</keyword>
<keyword id="KW-0614">Plasmid</keyword>
<accession>P12053</accession>
<sequence>MSKKAEEIQAKQSLEKENSNFSKTGYSNSRLNRHIMYTPEPKLHFDAMTIVGNLNKNNAHKLSEFMSIAPQIRLWDILQTKFKAKALQEKVYIEYDKVKADAWDRRNMRVEFNPNKLTHEEMLWLKQNIIDYMEDDGFTRLDLAFDFEDDLSDYYAMTDKSVKKTIFYGRNGKPETKYFGVRDSDRFIRIYNKKQERKDNADIEVMSEHLWRVEIELKRDMVDYWNDCFNDLHILKPDWSSLEKVKDQAMIYMLIHEESTWGKLERRTKNKYREMLKSISEIDLTDLMKLTLKENEKQLQKQIEFWQREFRFWE</sequence>
<proteinExistence type="evidence at protein level"/>
<reference key="1">
    <citation type="journal article" date="1988" name="Nucleic Acids Res.">
        <title>Nucleotide sequence of pS194, a streptomycin-resistance plasmid from Staphylococcus aureus.</title>
        <authorList>
            <person name="Projan S.J."/>
            <person name="Moghazeh S."/>
            <person name="Novick R.P."/>
        </authorList>
    </citation>
    <scope>NUCLEOTIDE SEQUENCE [GENOMIC DNA]</scope>
</reference>
<organism>
    <name type="scientific">Staphylococcus aureus</name>
    <dbReference type="NCBI Taxonomy" id="1280"/>
    <lineage>
        <taxon>Bacteria</taxon>
        <taxon>Bacillati</taxon>
        <taxon>Bacillota</taxon>
        <taxon>Bacilli</taxon>
        <taxon>Bacillales</taxon>
        <taxon>Staphylococcaceae</taxon>
        <taxon>Staphylococcus</taxon>
    </lineage>
</organism>
<dbReference type="EMBL" id="X06627">
    <property type="protein sequence ID" value="CAA29842.1"/>
    <property type="molecule type" value="Genomic_DNA"/>
</dbReference>
<dbReference type="PIR" id="S00937">
    <property type="entry name" value="S00937"/>
</dbReference>
<dbReference type="RefSeq" id="NP_976274.1">
    <property type="nucleotide sequence ID" value="NC_005564.1"/>
</dbReference>
<dbReference type="RefSeq" id="WP_011167206.1">
    <property type="nucleotide sequence ID" value="NZ_WNWJ01000020.1"/>
</dbReference>
<dbReference type="PDB" id="4CWC">
    <property type="method" value="X-ray"/>
    <property type="resolution" value="2.90 A"/>
    <property type="chains" value="A/C=220-314"/>
</dbReference>
<dbReference type="PDBsum" id="4CWC"/>
<dbReference type="SMR" id="P12053"/>
<dbReference type="EvolutionaryTrace" id="P12053"/>
<dbReference type="GO" id="GO:0006260">
    <property type="term" value="P:DNA replication"/>
    <property type="evidence" value="ECO:0007669"/>
    <property type="project" value="UniProtKB-KW"/>
</dbReference>
<dbReference type="InterPro" id="IPR003491">
    <property type="entry name" value="REP-like_C"/>
</dbReference>
<dbReference type="InterPro" id="IPR054456">
    <property type="entry name" value="RepD-like_N"/>
</dbReference>
<dbReference type="Pfam" id="PF02486">
    <property type="entry name" value="Rep_trans"/>
    <property type="match status" value="1"/>
</dbReference>
<dbReference type="Pfam" id="PF22477">
    <property type="entry name" value="RepD-like_N"/>
    <property type="match status" value="1"/>
</dbReference>
<geneLocation type="plasmid">
    <name>pS194</name>
</geneLocation>
<feature type="chain" id="PRO_0000068324" description="Replication initiation protein">
    <location>
        <begin position="1"/>
        <end position="314"/>
    </location>
</feature>
<feature type="region of interest" description="Disordered" evidence="1">
    <location>
        <begin position="1"/>
        <end position="25"/>
    </location>
</feature>
<feature type="compositionally biased region" description="Basic and acidic residues" evidence="1">
    <location>
        <begin position="1"/>
        <end position="18"/>
    </location>
</feature>
<feature type="strand" evidence="3">
    <location>
        <begin position="230"/>
        <end position="237"/>
    </location>
</feature>
<feature type="helix" evidence="3">
    <location>
        <begin position="239"/>
        <end position="241"/>
    </location>
</feature>
<feature type="helix" evidence="3">
    <location>
        <begin position="245"/>
        <end position="256"/>
    </location>
</feature>
<feature type="helix" evidence="3">
    <location>
        <begin position="258"/>
        <end position="261"/>
    </location>
</feature>
<feature type="helix" evidence="3">
    <location>
        <begin position="266"/>
        <end position="279"/>
    </location>
</feature>
<feature type="strand" evidence="3">
    <location>
        <begin position="280"/>
        <end position="283"/>
    </location>
</feature>
<feature type="helix" evidence="3">
    <location>
        <begin position="284"/>
        <end position="307"/>
    </location>
</feature>
<gene>
    <name type="primary">repE</name>
</gene>
<comment type="function">
    <text>This protein is probably a specific topoisomerase involved in initiating replication. This protein is specifically required and may be rate-limiting for replication of the plasmid in vivo.</text>
</comment>
<comment type="miscellaneous">
    <text>The nicking site of REP proteins is sequence, but not plasmid, specific.</text>
</comment>
<comment type="miscellaneous">
    <text>PS194 is a streptomycin-resistance plasmid.</text>
</comment>
<comment type="similarity">
    <text evidence="2">Belongs to the plasmid replication initiation factor family.</text>
</comment>
<name>REPE_STAAU</name>